<gene>
    <name evidence="1" type="primary">bpt</name>
    <name type="ordered locus">PA14_30260</name>
</gene>
<organism>
    <name type="scientific">Pseudomonas aeruginosa (strain UCBPP-PA14)</name>
    <dbReference type="NCBI Taxonomy" id="208963"/>
    <lineage>
        <taxon>Bacteria</taxon>
        <taxon>Pseudomonadati</taxon>
        <taxon>Pseudomonadota</taxon>
        <taxon>Gammaproteobacteria</taxon>
        <taxon>Pseudomonadales</taxon>
        <taxon>Pseudomonadaceae</taxon>
        <taxon>Pseudomonas</taxon>
    </lineage>
</organism>
<sequence length="235" mass="27826">MTELARLKFYATQPHPCSYLPEEQATTLFLDPSQPMDTQLYASLSEVGFRRSGDHLYRPHCQHCTACIAARIPVADFSPNRQQRRILKRNAELQVIRKRPSFNEEYYDLYRRYIEQRHADGDMYPPSRDQFATFLVRDLPFCCFFEFRLHGRLLAIAVTDVLPNGLSAVYTFYDPDEEQRSLGRYAILWQIAETERLGLQAVYLGYWIKNCRKMNYKTQYRPIELFVNQRWVALT</sequence>
<feature type="chain" id="PRO_1000045142" description="Aspartate/glutamate leucyltransferase">
    <location>
        <begin position="1"/>
        <end position="235"/>
    </location>
</feature>
<accession>Q02NB0</accession>
<proteinExistence type="inferred from homology"/>
<comment type="function">
    <text evidence="1">Functions in the N-end rule pathway of protein degradation where it conjugates Leu from its aminoacyl-tRNA to the N-termini of proteins containing an N-terminal aspartate or glutamate.</text>
</comment>
<comment type="catalytic activity">
    <reaction evidence="1">
        <text>N-terminal L-glutamyl-[protein] + L-leucyl-tRNA(Leu) = N-terminal L-leucyl-L-glutamyl-[protein] + tRNA(Leu) + H(+)</text>
        <dbReference type="Rhea" id="RHEA:50412"/>
        <dbReference type="Rhea" id="RHEA-COMP:9613"/>
        <dbReference type="Rhea" id="RHEA-COMP:9622"/>
        <dbReference type="Rhea" id="RHEA-COMP:12664"/>
        <dbReference type="Rhea" id="RHEA-COMP:12668"/>
        <dbReference type="ChEBI" id="CHEBI:15378"/>
        <dbReference type="ChEBI" id="CHEBI:64721"/>
        <dbReference type="ChEBI" id="CHEBI:78442"/>
        <dbReference type="ChEBI" id="CHEBI:78494"/>
        <dbReference type="ChEBI" id="CHEBI:133041"/>
        <dbReference type="EC" id="2.3.2.29"/>
    </reaction>
</comment>
<comment type="catalytic activity">
    <reaction evidence="1">
        <text>N-terminal L-aspartyl-[protein] + L-leucyl-tRNA(Leu) = N-terminal L-leucyl-L-aspartyl-[protein] + tRNA(Leu) + H(+)</text>
        <dbReference type="Rhea" id="RHEA:50420"/>
        <dbReference type="Rhea" id="RHEA-COMP:9613"/>
        <dbReference type="Rhea" id="RHEA-COMP:9622"/>
        <dbReference type="Rhea" id="RHEA-COMP:12669"/>
        <dbReference type="Rhea" id="RHEA-COMP:12674"/>
        <dbReference type="ChEBI" id="CHEBI:15378"/>
        <dbReference type="ChEBI" id="CHEBI:64720"/>
        <dbReference type="ChEBI" id="CHEBI:78442"/>
        <dbReference type="ChEBI" id="CHEBI:78494"/>
        <dbReference type="ChEBI" id="CHEBI:133042"/>
        <dbReference type="EC" id="2.3.2.29"/>
    </reaction>
</comment>
<comment type="subcellular location">
    <subcellularLocation>
        <location evidence="1">Cytoplasm</location>
    </subcellularLocation>
</comment>
<comment type="similarity">
    <text evidence="1">Belongs to the R-transferase family. Bpt subfamily.</text>
</comment>
<evidence type="ECO:0000255" key="1">
    <source>
        <dbReference type="HAMAP-Rule" id="MF_00689"/>
    </source>
</evidence>
<name>BPT_PSEAB</name>
<protein>
    <recommendedName>
        <fullName evidence="1">Aspartate/glutamate leucyltransferase</fullName>
        <ecNumber evidence="1">2.3.2.29</ecNumber>
    </recommendedName>
</protein>
<reference key="1">
    <citation type="journal article" date="2006" name="Genome Biol.">
        <title>Genomic analysis reveals that Pseudomonas aeruginosa virulence is combinatorial.</title>
        <authorList>
            <person name="Lee D.G."/>
            <person name="Urbach J.M."/>
            <person name="Wu G."/>
            <person name="Liberati N.T."/>
            <person name="Feinbaum R.L."/>
            <person name="Miyata S."/>
            <person name="Diggins L.T."/>
            <person name="He J."/>
            <person name="Saucier M."/>
            <person name="Deziel E."/>
            <person name="Friedman L."/>
            <person name="Li L."/>
            <person name="Grills G."/>
            <person name="Montgomery K."/>
            <person name="Kucherlapati R."/>
            <person name="Rahme L.G."/>
            <person name="Ausubel F.M."/>
        </authorList>
    </citation>
    <scope>NUCLEOTIDE SEQUENCE [LARGE SCALE GENOMIC DNA]</scope>
    <source>
        <strain>UCBPP-PA14</strain>
    </source>
</reference>
<dbReference type="EC" id="2.3.2.29" evidence="1"/>
<dbReference type="EMBL" id="CP000438">
    <property type="protein sequence ID" value="ABJ11841.1"/>
    <property type="molecule type" value="Genomic_DNA"/>
</dbReference>
<dbReference type="RefSeq" id="WP_003108766.1">
    <property type="nucleotide sequence ID" value="NZ_CP034244.1"/>
</dbReference>
<dbReference type="SMR" id="Q02NB0"/>
<dbReference type="KEGG" id="pau:PA14_30260"/>
<dbReference type="PseudoCAP" id="PA14_30260"/>
<dbReference type="HOGENOM" id="CLU_077607_0_0_6"/>
<dbReference type="BioCyc" id="PAER208963:G1G74-2533-MONOMER"/>
<dbReference type="Proteomes" id="UP000000653">
    <property type="component" value="Chromosome"/>
</dbReference>
<dbReference type="GO" id="GO:0005737">
    <property type="term" value="C:cytoplasm"/>
    <property type="evidence" value="ECO:0007669"/>
    <property type="project" value="UniProtKB-SubCell"/>
</dbReference>
<dbReference type="GO" id="GO:0004057">
    <property type="term" value="F:arginyl-tRNA--protein transferase activity"/>
    <property type="evidence" value="ECO:0007669"/>
    <property type="project" value="InterPro"/>
</dbReference>
<dbReference type="GO" id="GO:0008914">
    <property type="term" value="F:leucyl-tRNA--protein transferase activity"/>
    <property type="evidence" value="ECO:0007669"/>
    <property type="project" value="UniProtKB-UniRule"/>
</dbReference>
<dbReference type="GO" id="GO:0071596">
    <property type="term" value="P:ubiquitin-dependent protein catabolic process via the N-end rule pathway"/>
    <property type="evidence" value="ECO:0007669"/>
    <property type="project" value="InterPro"/>
</dbReference>
<dbReference type="HAMAP" id="MF_00689">
    <property type="entry name" value="Bpt"/>
    <property type="match status" value="1"/>
</dbReference>
<dbReference type="InterPro" id="IPR016181">
    <property type="entry name" value="Acyl_CoA_acyltransferase"/>
</dbReference>
<dbReference type="InterPro" id="IPR017138">
    <property type="entry name" value="Asp_Glu_LeuTrfase"/>
</dbReference>
<dbReference type="InterPro" id="IPR030700">
    <property type="entry name" value="N-end_Aminoacyl_Trfase"/>
</dbReference>
<dbReference type="InterPro" id="IPR007472">
    <property type="entry name" value="N-end_Aminoacyl_Trfase_C"/>
</dbReference>
<dbReference type="InterPro" id="IPR007471">
    <property type="entry name" value="N-end_Aminoacyl_Trfase_N"/>
</dbReference>
<dbReference type="NCBIfam" id="NF002341">
    <property type="entry name" value="PRK01305.1-1"/>
    <property type="match status" value="1"/>
</dbReference>
<dbReference type="NCBIfam" id="NF002342">
    <property type="entry name" value="PRK01305.1-3"/>
    <property type="match status" value="1"/>
</dbReference>
<dbReference type="NCBIfam" id="NF002345">
    <property type="entry name" value="PRK01305.2-2"/>
    <property type="match status" value="1"/>
</dbReference>
<dbReference type="NCBIfam" id="NF002346">
    <property type="entry name" value="PRK01305.2-3"/>
    <property type="match status" value="1"/>
</dbReference>
<dbReference type="PANTHER" id="PTHR21367">
    <property type="entry name" value="ARGININE-TRNA-PROTEIN TRANSFERASE 1"/>
    <property type="match status" value="1"/>
</dbReference>
<dbReference type="PANTHER" id="PTHR21367:SF1">
    <property type="entry name" value="ARGINYL-TRNA--PROTEIN TRANSFERASE 1"/>
    <property type="match status" value="1"/>
</dbReference>
<dbReference type="Pfam" id="PF04377">
    <property type="entry name" value="ATE_C"/>
    <property type="match status" value="1"/>
</dbReference>
<dbReference type="Pfam" id="PF04376">
    <property type="entry name" value="ATE_N"/>
    <property type="match status" value="1"/>
</dbReference>
<dbReference type="PIRSF" id="PIRSF037208">
    <property type="entry name" value="ATE_pro_prd"/>
    <property type="match status" value="1"/>
</dbReference>
<dbReference type="SUPFAM" id="SSF55729">
    <property type="entry name" value="Acyl-CoA N-acyltransferases (Nat)"/>
    <property type="match status" value="1"/>
</dbReference>
<keyword id="KW-0012">Acyltransferase</keyword>
<keyword id="KW-0963">Cytoplasm</keyword>
<keyword id="KW-0808">Transferase</keyword>